<feature type="chain" id="PRO_0000295338" description="PAN2-PAN3 deadenylation complex catalytic subunit pan2">
    <location>
        <begin position="1"/>
        <end position="1155"/>
    </location>
</feature>
<feature type="repeat" description="WD 1" evidence="2">
    <location>
        <begin position="102"/>
        <end position="145"/>
    </location>
</feature>
<feature type="repeat" description="WD 2" evidence="2">
    <location>
        <begin position="276"/>
        <end position="315"/>
    </location>
</feature>
<feature type="domain" description="USP" evidence="2">
    <location>
        <begin position="453"/>
        <end position="822"/>
    </location>
</feature>
<feature type="domain" description="Exonuclease" evidence="2">
    <location>
        <begin position="871"/>
        <end position="1049"/>
    </location>
</feature>
<feature type="region of interest" description="Linker" evidence="2">
    <location>
        <begin position="316"/>
        <end position="452"/>
    </location>
</feature>
<feature type="region of interest" description="Disordered" evidence="3">
    <location>
        <begin position="1095"/>
        <end position="1155"/>
    </location>
</feature>
<feature type="compositionally biased region" description="Polar residues" evidence="3">
    <location>
        <begin position="1097"/>
        <end position="1106"/>
    </location>
</feature>
<feature type="compositionally biased region" description="Low complexity" evidence="3">
    <location>
        <begin position="1107"/>
        <end position="1124"/>
    </location>
</feature>
<feature type="binding site" evidence="2">
    <location>
        <position position="874"/>
    </location>
    <ligand>
        <name>a divalent metal cation</name>
        <dbReference type="ChEBI" id="CHEBI:60240"/>
        <note>catalytic</note>
    </ligand>
</feature>
<feature type="binding site" evidence="2">
    <location>
        <position position="876"/>
    </location>
    <ligand>
        <name>a divalent metal cation</name>
        <dbReference type="ChEBI" id="CHEBI:60240"/>
        <note>catalytic</note>
    </ligand>
</feature>
<feature type="binding site" evidence="2">
    <location>
        <position position="983"/>
    </location>
    <ligand>
        <name>a divalent metal cation</name>
        <dbReference type="ChEBI" id="CHEBI:60240"/>
        <note>catalytic</note>
    </ligand>
</feature>
<feature type="binding site" evidence="2">
    <location>
        <position position="1042"/>
    </location>
    <ligand>
        <name>a divalent metal cation</name>
        <dbReference type="ChEBI" id="CHEBI:60240"/>
        <note>catalytic</note>
    </ligand>
</feature>
<reference key="1">
    <citation type="journal article" date="2005" name="Nature">
        <title>Genome sequencing and analysis of Aspergillus oryzae.</title>
        <authorList>
            <person name="Machida M."/>
            <person name="Asai K."/>
            <person name="Sano M."/>
            <person name="Tanaka T."/>
            <person name="Kumagai T."/>
            <person name="Terai G."/>
            <person name="Kusumoto K."/>
            <person name="Arima T."/>
            <person name="Akita O."/>
            <person name="Kashiwagi Y."/>
            <person name="Abe K."/>
            <person name="Gomi K."/>
            <person name="Horiuchi H."/>
            <person name="Kitamoto K."/>
            <person name="Kobayashi T."/>
            <person name="Takeuchi M."/>
            <person name="Denning D.W."/>
            <person name="Galagan J.E."/>
            <person name="Nierman W.C."/>
            <person name="Yu J."/>
            <person name="Archer D.B."/>
            <person name="Bennett J.W."/>
            <person name="Bhatnagar D."/>
            <person name="Cleveland T.E."/>
            <person name="Fedorova N.D."/>
            <person name="Gotoh O."/>
            <person name="Horikawa H."/>
            <person name="Hosoyama A."/>
            <person name="Ichinomiya M."/>
            <person name="Igarashi R."/>
            <person name="Iwashita K."/>
            <person name="Juvvadi P.R."/>
            <person name="Kato M."/>
            <person name="Kato Y."/>
            <person name="Kin T."/>
            <person name="Kokubun A."/>
            <person name="Maeda H."/>
            <person name="Maeyama N."/>
            <person name="Maruyama J."/>
            <person name="Nagasaki H."/>
            <person name="Nakajima T."/>
            <person name="Oda K."/>
            <person name="Okada K."/>
            <person name="Paulsen I."/>
            <person name="Sakamoto K."/>
            <person name="Sawano T."/>
            <person name="Takahashi M."/>
            <person name="Takase K."/>
            <person name="Terabayashi Y."/>
            <person name="Wortman J.R."/>
            <person name="Yamada O."/>
            <person name="Yamagata Y."/>
            <person name="Anazawa H."/>
            <person name="Hata Y."/>
            <person name="Koide Y."/>
            <person name="Komori T."/>
            <person name="Koyama Y."/>
            <person name="Minetoki T."/>
            <person name="Suharnan S."/>
            <person name="Tanaka A."/>
            <person name="Isono K."/>
            <person name="Kuhara S."/>
            <person name="Ogasawara N."/>
            <person name="Kikuchi H."/>
        </authorList>
    </citation>
    <scope>NUCLEOTIDE SEQUENCE [LARGE SCALE GENOMIC DNA]</scope>
    <source>
        <strain>ATCC 42149 / RIB 40</strain>
    </source>
</reference>
<keyword id="KW-0963">Cytoplasm</keyword>
<keyword id="KW-0269">Exonuclease</keyword>
<keyword id="KW-0378">Hydrolase</keyword>
<keyword id="KW-0479">Metal-binding</keyword>
<keyword id="KW-0507">mRNA processing</keyword>
<keyword id="KW-0540">Nuclease</keyword>
<keyword id="KW-1185">Reference proteome</keyword>
<keyword id="KW-0677">Repeat</keyword>
<keyword id="KW-0853">WD repeat</keyword>
<dbReference type="EC" id="3.1.13.4" evidence="2"/>
<dbReference type="EMBL" id="BA000050">
    <property type="protein sequence ID" value="BAE57469.1"/>
    <property type="molecule type" value="Genomic_DNA"/>
</dbReference>
<dbReference type="RefSeq" id="XP_001819471.1">
    <property type="nucleotide sequence ID" value="XM_001819419.2"/>
</dbReference>
<dbReference type="SMR" id="Q2ULU6"/>
<dbReference type="STRING" id="510516.Q2ULU6"/>
<dbReference type="EnsemblFungi" id="BAE57469">
    <property type="protein sequence ID" value="BAE57469"/>
    <property type="gene ID" value="AO090003000263"/>
</dbReference>
<dbReference type="GeneID" id="5991454"/>
<dbReference type="KEGG" id="aor:AO090003000263"/>
<dbReference type="VEuPathDB" id="FungiDB:AO090003000263"/>
<dbReference type="HOGENOM" id="CLU_002369_1_0_1"/>
<dbReference type="OMA" id="TQELLWT"/>
<dbReference type="OrthoDB" id="25481at5052"/>
<dbReference type="Proteomes" id="UP000006564">
    <property type="component" value="Chromosome 2"/>
</dbReference>
<dbReference type="GO" id="GO:0000932">
    <property type="term" value="C:P-body"/>
    <property type="evidence" value="ECO:0007669"/>
    <property type="project" value="TreeGrafter"/>
</dbReference>
<dbReference type="GO" id="GO:0031251">
    <property type="term" value="C:PAN complex"/>
    <property type="evidence" value="ECO:0007669"/>
    <property type="project" value="UniProtKB-UniRule"/>
</dbReference>
<dbReference type="GO" id="GO:0046872">
    <property type="term" value="F:metal ion binding"/>
    <property type="evidence" value="ECO:0007669"/>
    <property type="project" value="UniProtKB-KW"/>
</dbReference>
<dbReference type="GO" id="GO:0003676">
    <property type="term" value="F:nucleic acid binding"/>
    <property type="evidence" value="ECO:0007669"/>
    <property type="project" value="InterPro"/>
</dbReference>
<dbReference type="GO" id="GO:0004535">
    <property type="term" value="F:poly(A)-specific ribonuclease activity"/>
    <property type="evidence" value="ECO:0007669"/>
    <property type="project" value="UniProtKB-UniRule"/>
</dbReference>
<dbReference type="GO" id="GO:0006397">
    <property type="term" value="P:mRNA processing"/>
    <property type="evidence" value="ECO:0007669"/>
    <property type="project" value="UniProtKB-KW"/>
</dbReference>
<dbReference type="GO" id="GO:0000289">
    <property type="term" value="P:nuclear-transcribed mRNA poly(A) tail shortening"/>
    <property type="evidence" value="ECO:0007669"/>
    <property type="project" value="UniProtKB-UniRule"/>
</dbReference>
<dbReference type="CDD" id="cd06143">
    <property type="entry name" value="PAN2_exo"/>
    <property type="match status" value="1"/>
</dbReference>
<dbReference type="FunFam" id="2.130.10.10:FF:000459">
    <property type="entry name" value="PAN2-PAN3 deadenylation complex catalytic subunit PAN2"/>
    <property type="match status" value="1"/>
</dbReference>
<dbReference type="FunFam" id="3.30.420.10:FF:000028">
    <property type="entry name" value="PAN2-PAN3 deadenylation complex catalytic subunit PAN2"/>
    <property type="match status" value="1"/>
</dbReference>
<dbReference type="FunFam" id="3.90.70.10:FF:000135">
    <property type="entry name" value="PAN2-PAN3 deadenylation complex catalytic subunit pan2"/>
    <property type="match status" value="1"/>
</dbReference>
<dbReference type="Gene3D" id="3.90.70.10">
    <property type="entry name" value="Cysteine proteinases"/>
    <property type="match status" value="1"/>
</dbReference>
<dbReference type="Gene3D" id="3.30.420.10">
    <property type="entry name" value="Ribonuclease H-like superfamily/Ribonuclease H"/>
    <property type="match status" value="1"/>
</dbReference>
<dbReference type="Gene3D" id="2.130.10.10">
    <property type="entry name" value="YVTN repeat-like/Quinoprotein amine dehydrogenase"/>
    <property type="match status" value="1"/>
</dbReference>
<dbReference type="HAMAP" id="MF_03182">
    <property type="entry name" value="PAN2"/>
    <property type="match status" value="1"/>
</dbReference>
<dbReference type="InterPro" id="IPR013520">
    <property type="entry name" value="Exonuclease_RNaseT/DNA_pol3"/>
</dbReference>
<dbReference type="InterPro" id="IPR030843">
    <property type="entry name" value="PAN2"/>
</dbReference>
<dbReference type="InterPro" id="IPR050785">
    <property type="entry name" value="PAN2-PAN3_catalytic_subunit"/>
</dbReference>
<dbReference type="InterPro" id="IPR048841">
    <property type="entry name" value="PAN2_N"/>
</dbReference>
<dbReference type="InterPro" id="IPR028881">
    <property type="entry name" value="PAN2_UCH_dom"/>
</dbReference>
<dbReference type="InterPro" id="IPR038765">
    <property type="entry name" value="Papain-like_cys_pep_sf"/>
</dbReference>
<dbReference type="InterPro" id="IPR011047">
    <property type="entry name" value="Quinoprotein_ADH-like_sf"/>
</dbReference>
<dbReference type="InterPro" id="IPR012337">
    <property type="entry name" value="RNaseH-like_sf"/>
</dbReference>
<dbReference type="InterPro" id="IPR036397">
    <property type="entry name" value="RNaseH_sf"/>
</dbReference>
<dbReference type="InterPro" id="IPR028889">
    <property type="entry name" value="USP_dom"/>
</dbReference>
<dbReference type="InterPro" id="IPR015943">
    <property type="entry name" value="WD40/YVTN_repeat-like_dom_sf"/>
</dbReference>
<dbReference type="PANTHER" id="PTHR15728">
    <property type="entry name" value="DEADENYLATION COMPLEX CATALYTIC SUBUNIT PAN2"/>
    <property type="match status" value="1"/>
</dbReference>
<dbReference type="PANTHER" id="PTHR15728:SF0">
    <property type="entry name" value="PAN2-PAN3 DEADENYLATION COMPLEX CATALYTIC SUBUNIT PAN2"/>
    <property type="match status" value="1"/>
</dbReference>
<dbReference type="Pfam" id="PF20770">
    <property type="entry name" value="PAN2_N"/>
    <property type="match status" value="1"/>
</dbReference>
<dbReference type="Pfam" id="PF00929">
    <property type="entry name" value="RNase_T"/>
    <property type="match status" value="1"/>
</dbReference>
<dbReference type="Pfam" id="PF13423">
    <property type="entry name" value="UCH_1"/>
    <property type="match status" value="1"/>
</dbReference>
<dbReference type="SMART" id="SM00479">
    <property type="entry name" value="EXOIII"/>
    <property type="match status" value="1"/>
</dbReference>
<dbReference type="SUPFAM" id="SSF54001">
    <property type="entry name" value="Cysteine proteinases"/>
    <property type="match status" value="1"/>
</dbReference>
<dbReference type="SUPFAM" id="SSF50998">
    <property type="entry name" value="Quinoprotein alcohol dehydrogenase-like"/>
    <property type="match status" value="1"/>
</dbReference>
<dbReference type="SUPFAM" id="SSF53098">
    <property type="entry name" value="Ribonuclease H-like"/>
    <property type="match status" value="1"/>
</dbReference>
<dbReference type="PROSITE" id="PS50235">
    <property type="entry name" value="USP_3"/>
    <property type="match status" value="1"/>
</dbReference>
<sequence>MEADWDELSRIQVPPPSPHGMPTIATAIAFDDVMELLWVGNEYGRITSFCGPELQRYTSVRAHPVSEGPVRQILFHDRGVISLSSKSVHMITRRGLTQWHITHEDMTDLRCMSFTAQLNKVIVAGCQKAMFTIDIDKGHIVDKLPTEYNYTMMKKSRYLCAATDTGSVNALSLTDFRVVKSWKAHGTAVNDMDARNDLLVTCGFSVRHLGSPIVDPLANVYDLKTLSPLPPIPFHAGAAYVRMHPKLHTTSFVASQTGQLQVVDLMNPNAINLRQANVSFMLGIDLSPSGEALAINDAECAIHLWGSPSKVHFNEMSKEVEFADVPARPPPLDWSPDTPLSMIGMPYYHERLFSAWPSHLVFEIGSPPAPIDQALIPYLRPAEIGHYAPNPKKTRRNQVENTRALANSEPALIAPKFLSEKAREQSKAKSDGLVTDAAETLAGTKLNGEAEDDPLLKYSNVEIKYSRFGVDDFDFRFYNQTKFSGLETHIANSFTNALLQLFKFIPLIRNVALQHAASACIFENCLLCEMGYLFDMLEKADGQNCQATNLLKTFGSFREASSLGLLEENLTNKSLSTSIQSVNRFFLGQISHDFRMILPSSDDLDHKLATVASESIRCMFCQKEIVRPGNSLVNELIYPAIDIKQIRRNPAYRFSNILRASIERETQNRGWCNYCRRYQQVAIRKTVHRMPLVMMLNTALNNPIYRRLWAIPGWLPEAVGLVVDAGQILCFEGEDLRMRMQNNMPGLVVYELVGVVSEIDIPEHQKAHLVSFINVSISSREPETTNKWHLFNDFLVTEVDKDEALRFNQPWKVPCVLAYQVKDARHAMDDNWKNVLDTTLLYRDWSLNGGRSVESLATLSEEEKPTPGTPVALDTEFVDLEKAEIDVKADGSQEIVRPSKSGLARVSVLRGSGTREGVPFIDDYITIKETIVDYVTQYSGIKPGDLDPRTSQHNLVPLKVAYKKLWLLLNLGCVFVGHGLASDFRKINIQVPKCQTVDTQYLFFHPGKNRRLSLRYLAWAVFKEYIQEEPTDNNQGHDSIEDARMALRLWKKFQEYEDAGVVSQILEELFREGSKLGFRPPARNGATAVLSRPGTAVTMQNNSGRNTPSTPEVTAPTASAPTTPRQGFRRSVALTPSNGSFAPGTGDFFGGSPLK</sequence>
<organism>
    <name type="scientific">Aspergillus oryzae (strain ATCC 42149 / RIB 40)</name>
    <name type="common">Yellow koji mold</name>
    <dbReference type="NCBI Taxonomy" id="510516"/>
    <lineage>
        <taxon>Eukaryota</taxon>
        <taxon>Fungi</taxon>
        <taxon>Dikarya</taxon>
        <taxon>Ascomycota</taxon>
        <taxon>Pezizomycotina</taxon>
        <taxon>Eurotiomycetes</taxon>
        <taxon>Eurotiomycetidae</taxon>
        <taxon>Eurotiales</taxon>
        <taxon>Aspergillaceae</taxon>
        <taxon>Aspergillus</taxon>
        <taxon>Aspergillus subgen. Circumdati</taxon>
    </lineage>
</organism>
<protein>
    <recommendedName>
        <fullName evidence="2">PAN2-PAN3 deadenylation complex catalytic subunit pan2</fullName>
        <ecNumber evidence="2">3.1.13.4</ecNumber>
    </recommendedName>
    <alternativeName>
        <fullName evidence="2">PAB1P-dependent poly(A)-specific ribonuclease</fullName>
    </alternativeName>
    <alternativeName>
        <fullName evidence="2">Poly(A)-nuclease deadenylation complex subunit 2</fullName>
        <shortName evidence="2">PAN deadenylation complex subunit 2</shortName>
    </alternativeName>
</protein>
<evidence type="ECO:0000250" key="1"/>
<evidence type="ECO:0000255" key="2">
    <source>
        <dbReference type="HAMAP-Rule" id="MF_03182"/>
    </source>
</evidence>
<evidence type="ECO:0000256" key="3">
    <source>
        <dbReference type="SAM" id="MobiDB-lite"/>
    </source>
</evidence>
<gene>
    <name evidence="2" type="primary">pan2</name>
    <name type="ORF">AO090003000263</name>
</gene>
<accession>Q2ULU6</accession>
<proteinExistence type="inferred from homology"/>
<comment type="function">
    <text evidence="2">Catalytic subunit of the poly(A)-nuclease (PAN) deadenylation complex, one of two cytoplasmic mRNA deadenylases involved in mRNA turnover. PAN specifically shortens poly(A) tails of RNA and the activity is stimulated by poly(A)-binding protein pab1. PAN deadenylation is followed by rapid degradation of the shortened mRNA tails by the CCR4-NOT complex. Deadenylated mRNAs are then degraded by two alternative mechanisms, namely exosome-mediated 3'-5' exonucleolytic degradation, or deadenylation-dependent mRNA decaping and subsequent 5'-3' exonucleolytic degradation by xrn1. May also be involved in post-transcriptional maturation of mRNA poly(A) tails.</text>
</comment>
<comment type="catalytic activity">
    <reaction evidence="2">
        <text>Exonucleolytic cleavage of poly(A) to 5'-AMP.</text>
        <dbReference type="EC" id="3.1.13.4"/>
    </reaction>
</comment>
<comment type="cofactor">
    <cofactor evidence="2">
        <name>a divalent metal cation</name>
        <dbReference type="ChEBI" id="CHEBI:60240"/>
    </cofactor>
    <text evidence="2">Binds 2 metal cations per subunit in the catalytic exonuclease domain.</text>
</comment>
<comment type="activity regulation">
    <text evidence="1 2">Positively regulated by the regulatory subunit pan3.</text>
</comment>
<comment type="subunit">
    <text evidence="2">Forms a heterotrimer with an asymmetric homodimer of the regulatory subunit pan3 to form the poly(A)-nuclease (PAN) deadenylation complex.</text>
</comment>
<comment type="subcellular location">
    <subcellularLocation>
        <location evidence="2">Cytoplasm</location>
    </subcellularLocation>
</comment>
<comment type="domain">
    <text evidence="2">Contains a pseudo-UCH domain. This ubiquitin C-terminal hydrolase (UCH)-like or ubiquitin specific protease (USP)-like domain is predicted to be catalytically inactive because it lacks the active site catalytic triad characteristic of thiol proteases, with residues at the equivalent structural positions that are incompatible with catalysis, and it cannot bind ubiquitin. It functions as a structural scaffold for intra- and intermolecular interactions in the complex.</text>
</comment>
<comment type="domain">
    <text evidence="2">The linker, or PAN3 interaction domain (PID), between the WD40 repeats and the pseudo-UCH domain mediates interaction with pan3.</text>
</comment>
<comment type="similarity">
    <text evidence="2">Belongs to the peptidase C19 family. PAN2 subfamily.</text>
</comment>
<name>PAN2_ASPOR</name>